<dbReference type="EC" id="2.5.1.145" evidence="1"/>
<dbReference type="EMBL" id="CP001614">
    <property type="protein sequence ID" value="ACR12474.1"/>
    <property type="molecule type" value="Genomic_DNA"/>
</dbReference>
<dbReference type="RefSeq" id="WP_015818586.1">
    <property type="nucleotide sequence ID" value="NC_012997.1"/>
</dbReference>
<dbReference type="SMR" id="C5BMA2"/>
<dbReference type="STRING" id="377629.TERTU_0364"/>
<dbReference type="KEGG" id="ttu:TERTU_0364"/>
<dbReference type="eggNOG" id="COG0682">
    <property type="taxonomic scope" value="Bacteria"/>
</dbReference>
<dbReference type="HOGENOM" id="CLU_013386_1_0_6"/>
<dbReference type="OrthoDB" id="871140at2"/>
<dbReference type="UniPathway" id="UPA00664"/>
<dbReference type="Proteomes" id="UP000009080">
    <property type="component" value="Chromosome"/>
</dbReference>
<dbReference type="GO" id="GO:0005886">
    <property type="term" value="C:plasma membrane"/>
    <property type="evidence" value="ECO:0007669"/>
    <property type="project" value="UniProtKB-SubCell"/>
</dbReference>
<dbReference type="GO" id="GO:0008961">
    <property type="term" value="F:phosphatidylglycerol-prolipoprotein diacylglyceryl transferase activity"/>
    <property type="evidence" value="ECO:0007669"/>
    <property type="project" value="UniProtKB-UniRule"/>
</dbReference>
<dbReference type="GO" id="GO:0042158">
    <property type="term" value="P:lipoprotein biosynthetic process"/>
    <property type="evidence" value="ECO:0007669"/>
    <property type="project" value="UniProtKB-UniRule"/>
</dbReference>
<dbReference type="HAMAP" id="MF_01147">
    <property type="entry name" value="Lgt"/>
    <property type="match status" value="1"/>
</dbReference>
<dbReference type="InterPro" id="IPR001640">
    <property type="entry name" value="Lgt"/>
</dbReference>
<dbReference type="NCBIfam" id="TIGR00544">
    <property type="entry name" value="lgt"/>
    <property type="match status" value="1"/>
</dbReference>
<dbReference type="PANTHER" id="PTHR30589:SF0">
    <property type="entry name" value="PHOSPHATIDYLGLYCEROL--PROLIPOPROTEIN DIACYLGLYCERYL TRANSFERASE"/>
    <property type="match status" value="1"/>
</dbReference>
<dbReference type="PANTHER" id="PTHR30589">
    <property type="entry name" value="PROLIPOPROTEIN DIACYLGLYCERYL TRANSFERASE"/>
    <property type="match status" value="1"/>
</dbReference>
<dbReference type="Pfam" id="PF01790">
    <property type="entry name" value="LGT"/>
    <property type="match status" value="1"/>
</dbReference>
<dbReference type="PROSITE" id="PS01311">
    <property type="entry name" value="LGT"/>
    <property type="match status" value="1"/>
</dbReference>
<feature type="chain" id="PRO_1000213660" description="Phosphatidylglycerol--prolipoprotein diacylglyceryl transferase">
    <location>
        <begin position="1"/>
        <end position="286"/>
    </location>
</feature>
<feature type="transmembrane region" description="Helical" evidence="1">
    <location>
        <begin position="29"/>
        <end position="49"/>
    </location>
</feature>
<feature type="transmembrane region" description="Helical" evidence="1">
    <location>
        <begin position="66"/>
        <end position="86"/>
    </location>
</feature>
<feature type="transmembrane region" description="Helical" evidence="1">
    <location>
        <begin position="101"/>
        <end position="121"/>
    </location>
</feature>
<feature type="transmembrane region" description="Helical" evidence="1">
    <location>
        <begin position="130"/>
        <end position="150"/>
    </location>
</feature>
<feature type="transmembrane region" description="Helical" evidence="1">
    <location>
        <begin position="181"/>
        <end position="201"/>
    </location>
</feature>
<feature type="transmembrane region" description="Helical" evidence="1">
    <location>
        <begin position="209"/>
        <end position="229"/>
    </location>
</feature>
<feature type="transmembrane region" description="Helical" evidence="1">
    <location>
        <begin position="250"/>
        <end position="270"/>
    </location>
</feature>
<feature type="binding site" evidence="1">
    <location>
        <position position="149"/>
    </location>
    <ligand>
        <name>a 1,2-diacyl-sn-glycero-3-phospho-(1'-sn-glycerol)</name>
        <dbReference type="ChEBI" id="CHEBI:64716"/>
    </ligand>
</feature>
<comment type="function">
    <text evidence="1">Catalyzes the transfer of the diacylglyceryl group from phosphatidylglycerol to the sulfhydryl group of the N-terminal cysteine of a prolipoprotein, the first step in the formation of mature lipoproteins.</text>
</comment>
<comment type="catalytic activity">
    <reaction evidence="1">
        <text>L-cysteinyl-[prolipoprotein] + a 1,2-diacyl-sn-glycero-3-phospho-(1'-sn-glycerol) = an S-1,2-diacyl-sn-glyceryl-L-cysteinyl-[prolipoprotein] + sn-glycerol 1-phosphate + H(+)</text>
        <dbReference type="Rhea" id="RHEA:56712"/>
        <dbReference type="Rhea" id="RHEA-COMP:14679"/>
        <dbReference type="Rhea" id="RHEA-COMP:14680"/>
        <dbReference type="ChEBI" id="CHEBI:15378"/>
        <dbReference type="ChEBI" id="CHEBI:29950"/>
        <dbReference type="ChEBI" id="CHEBI:57685"/>
        <dbReference type="ChEBI" id="CHEBI:64716"/>
        <dbReference type="ChEBI" id="CHEBI:140658"/>
        <dbReference type="EC" id="2.5.1.145"/>
    </reaction>
</comment>
<comment type="pathway">
    <text evidence="1">Protein modification; lipoprotein biosynthesis (diacylglyceryl transfer).</text>
</comment>
<comment type="subcellular location">
    <subcellularLocation>
        <location evidence="1">Cell inner membrane</location>
        <topology evidence="1">Multi-pass membrane protein</topology>
    </subcellularLocation>
</comment>
<comment type="similarity">
    <text evidence="1">Belongs to the Lgt family.</text>
</comment>
<proteinExistence type="inferred from homology"/>
<gene>
    <name evidence="1" type="primary">lgt</name>
    <name type="ordered locus">TERTU_0364</name>
</gene>
<organism>
    <name type="scientific">Teredinibacter turnerae (strain ATCC 39867 / T7901)</name>
    <dbReference type="NCBI Taxonomy" id="377629"/>
    <lineage>
        <taxon>Bacteria</taxon>
        <taxon>Pseudomonadati</taxon>
        <taxon>Pseudomonadota</taxon>
        <taxon>Gammaproteobacteria</taxon>
        <taxon>Cellvibrionales</taxon>
        <taxon>Cellvibrionaceae</taxon>
        <taxon>Teredinibacter</taxon>
    </lineage>
</organism>
<sequence length="286" mass="32121">MLKYPEIDPVALSLGSVTVFGKTINLPDIHWYGLMYLFGFILCWAVGTYRAGKPHNVVHKSWLEDLVFYVAMGVVLGGRCGYVFFYNFGAFLDDPLWLFRVWEGGMSFHGGLLGVILAMMLYARKMQVRFLDLMDFVAPLVPIGLGLGRIGNFIGQELWGRVTTLPIGMVFPKDPGVARHPSQLYQAALEGLVLFAVLFWFSSKPRPRAAVASLFLILYGCFRFAVEFVREPDAHIGFDMFGWLTRGQELSLPMIIIGALIFFYAYRHPAYAEKAPDPRANGSKKG</sequence>
<evidence type="ECO:0000255" key="1">
    <source>
        <dbReference type="HAMAP-Rule" id="MF_01147"/>
    </source>
</evidence>
<accession>C5BMA2</accession>
<protein>
    <recommendedName>
        <fullName evidence="1">Phosphatidylglycerol--prolipoprotein diacylglyceryl transferase</fullName>
        <ecNumber evidence="1">2.5.1.145</ecNumber>
    </recommendedName>
</protein>
<reference key="1">
    <citation type="journal article" date="2009" name="PLoS ONE">
        <title>The complete genome of Teredinibacter turnerae T7901: an intracellular endosymbiont of marine wood-boring bivalves (shipworms).</title>
        <authorList>
            <person name="Yang J.C."/>
            <person name="Madupu R."/>
            <person name="Durkin A.S."/>
            <person name="Ekborg N.A."/>
            <person name="Pedamallu C.S."/>
            <person name="Hostetler J.B."/>
            <person name="Radune D."/>
            <person name="Toms B.S."/>
            <person name="Henrissat B."/>
            <person name="Coutinho P.M."/>
            <person name="Schwarz S."/>
            <person name="Field L."/>
            <person name="Trindade-Silva A.E."/>
            <person name="Soares C.A.G."/>
            <person name="Elshahawi S."/>
            <person name="Hanora A."/>
            <person name="Schmidt E.W."/>
            <person name="Haygood M.G."/>
            <person name="Posfai J."/>
            <person name="Benner J."/>
            <person name="Madinger C."/>
            <person name="Nove J."/>
            <person name="Anton B."/>
            <person name="Chaudhary K."/>
            <person name="Foster J."/>
            <person name="Holman A."/>
            <person name="Kumar S."/>
            <person name="Lessard P.A."/>
            <person name="Luyten Y.A."/>
            <person name="Slatko B."/>
            <person name="Wood N."/>
            <person name="Wu B."/>
            <person name="Teplitski M."/>
            <person name="Mougous J.D."/>
            <person name="Ward N."/>
            <person name="Eisen J.A."/>
            <person name="Badger J.H."/>
            <person name="Distel D.L."/>
        </authorList>
    </citation>
    <scope>NUCLEOTIDE SEQUENCE [LARGE SCALE GENOMIC DNA]</scope>
    <source>
        <strain>ATCC 39867 / T7901</strain>
    </source>
</reference>
<name>LGT_TERTT</name>
<keyword id="KW-0997">Cell inner membrane</keyword>
<keyword id="KW-1003">Cell membrane</keyword>
<keyword id="KW-0472">Membrane</keyword>
<keyword id="KW-1185">Reference proteome</keyword>
<keyword id="KW-0808">Transferase</keyword>
<keyword id="KW-0812">Transmembrane</keyword>
<keyword id="KW-1133">Transmembrane helix</keyword>